<evidence type="ECO:0000255" key="1">
    <source>
        <dbReference type="HAMAP-Rule" id="MF_00139"/>
    </source>
</evidence>
<evidence type="ECO:0000255" key="2">
    <source>
        <dbReference type="PROSITE-ProRule" id="PRU01202"/>
    </source>
</evidence>
<name>PUR9_SHEWM</name>
<dbReference type="EC" id="2.1.2.3" evidence="1"/>
<dbReference type="EC" id="3.5.4.10" evidence="1"/>
<dbReference type="EMBL" id="CP000961">
    <property type="protein sequence ID" value="ACA84597.1"/>
    <property type="molecule type" value="Genomic_DNA"/>
</dbReference>
<dbReference type="RefSeq" id="WP_012322946.1">
    <property type="nucleotide sequence ID" value="NC_010506.1"/>
</dbReference>
<dbReference type="SMR" id="B1KNA0"/>
<dbReference type="STRING" id="392500.Swoo_0296"/>
<dbReference type="KEGG" id="swd:Swoo_0296"/>
<dbReference type="eggNOG" id="COG0138">
    <property type="taxonomic scope" value="Bacteria"/>
</dbReference>
<dbReference type="HOGENOM" id="CLU_016316_5_2_6"/>
<dbReference type="UniPathway" id="UPA00074">
    <property type="reaction ID" value="UER00133"/>
</dbReference>
<dbReference type="UniPathway" id="UPA00074">
    <property type="reaction ID" value="UER00135"/>
</dbReference>
<dbReference type="Proteomes" id="UP000002168">
    <property type="component" value="Chromosome"/>
</dbReference>
<dbReference type="GO" id="GO:0005829">
    <property type="term" value="C:cytosol"/>
    <property type="evidence" value="ECO:0007669"/>
    <property type="project" value="TreeGrafter"/>
</dbReference>
<dbReference type="GO" id="GO:0003937">
    <property type="term" value="F:IMP cyclohydrolase activity"/>
    <property type="evidence" value="ECO:0007669"/>
    <property type="project" value="UniProtKB-UniRule"/>
</dbReference>
<dbReference type="GO" id="GO:0004643">
    <property type="term" value="F:phosphoribosylaminoimidazolecarboxamide formyltransferase activity"/>
    <property type="evidence" value="ECO:0007669"/>
    <property type="project" value="UniProtKB-UniRule"/>
</dbReference>
<dbReference type="GO" id="GO:0006189">
    <property type="term" value="P:'de novo' IMP biosynthetic process"/>
    <property type="evidence" value="ECO:0007669"/>
    <property type="project" value="UniProtKB-UniRule"/>
</dbReference>
<dbReference type="CDD" id="cd01421">
    <property type="entry name" value="IMPCH"/>
    <property type="match status" value="1"/>
</dbReference>
<dbReference type="FunFam" id="3.40.140.20:FF:000001">
    <property type="entry name" value="Bifunctional purine biosynthesis protein PurH"/>
    <property type="match status" value="1"/>
</dbReference>
<dbReference type="FunFam" id="3.40.140.20:FF:000002">
    <property type="entry name" value="Bifunctional purine biosynthesis protein PurH"/>
    <property type="match status" value="1"/>
</dbReference>
<dbReference type="FunFam" id="3.40.50.1380:FF:000001">
    <property type="entry name" value="Bifunctional purine biosynthesis protein PurH"/>
    <property type="match status" value="1"/>
</dbReference>
<dbReference type="Gene3D" id="3.40.140.20">
    <property type="match status" value="2"/>
</dbReference>
<dbReference type="Gene3D" id="3.40.50.1380">
    <property type="entry name" value="Methylglyoxal synthase-like domain"/>
    <property type="match status" value="1"/>
</dbReference>
<dbReference type="HAMAP" id="MF_00139">
    <property type="entry name" value="PurH"/>
    <property type="match status" value="1"/>
</dbReference>
<dbReference type="InterPro" id="IPR024051">
    <property type="entry name" value="AICAR_Tfase_dup_dom_sf"/>
</dbReference>
<dbReference type="InterPro" id="IPR016193">
    <property type="entry name" value="Cytidine_deaminase-like"/>
</dbReference>
<dbReference type="InterPro" id="IPR011607">
    <property type="entry name" value="MGS-like_dom"/>
</dbReference>
<dbReference type="InterPro" id="IPR036914">
    <property type="entry name" value="MGS-like_dom_sf"/>
</dbReference>
<dbReference type="InterPro" id="IPR002695">
    <property type="entry name" value="PurH-like"/>
</dbReference>
<dbReference type="NCBIfam" id="NF002049">
    <property type="entry name" value="PRK00881.1"/>
    <property type="match status" value="1"/>
</dbReference>
<dbReference type="NCBIfam" id="TIGR00355">
    <property type="entry name" value="purH"/>
    <property type="match status" value="1"/>
</dbReference>
<dbReference type="PANTHER" id="PTHR11692:SF0">
    <property type="entry name" value="BIFUNCTIONAL PURINE BIOSYNTHESIS PROTEIN ATIC"/>
    <property type="match status" value="1"/>
</dbReference>
<dbReference type="PANTHER" id="PTHR11692">
    <property type="entry name" value="BIFUNCTIONAL PURINE BIOSYNTHESIS PROTEIN PURH"/>
    <property type="match status" value="1"/>
</dbReference>
<dbReference type="Pfam" id="PF01808">
    <property type="entry name" value="AICARFT_IMPCHas"/>
    <property type="match status" value="1"/>
</dbReference>
<dbReference type="Pfam" id="PF02142">
    <property type="entry name" value="MGS"/>
    <property type="match status" value="1"/>
</dbReference>
<dbReference type="PIRSF" id="PIRSF000414">
    <property type="entry name" value="AICARFT_IMPCHas"/>
    <property type="match status" value="1"/>
</dbReference>
<dbReference type="SMART" id="SM00798">
    <property type="entry name" value="AICARFT_IMPCHas"/>
    <property type="match status" value="1"/>
</dbReference>
<dbReference type="SMART" id="SM00851">
    <property type="entry name" value="MGS"/>
    <property type="match status" value="1"/>
</dbReference>
<dbReference type="SUPFAM" id="SSF53927">
    <property type="entry name" value="Cytidine deaminase-like"/>
    <property type="match status" value="1"/>
</dbReference>
<dbReference type="SUPFAM" id="SSF52335">
    <property type="entry name" value="Methylglyoxal synthase-like"/>
    <property type="match status" value="1"/>
</dbReference>
<dbReference type="PROSITE" id="PS51855">
    <property type="entry name" value="MGS"/>
    <property type="match status" value="1"/>
</dbReference>
<comment type="catalytic activity">
    <reaction evidence="1">
        <text>(6R)-10-formyltetrahydrofolate + 5-amino-1-(5-phospho-beta-D-ribosyl)imidazole-4-carboxamide = 5-formamido-1-(5-phospho-D-ribosyl)imidazole-4-carboxamide + (6S)-5,6,7,8-tetrahydrofolate</text>
        <dbReference type="Rhea" id="RHEA:22192"/>
        <dbReference type="ChEBI" id="CHEBI:57453"/>
        <dbReference type="ChEBI" id="CHEBI:58467"/>
        <dbReference type="ChEBI" id="CHEBI:58475"/>
        <dbReference type="ChEBI" id="CHEBI:195366"/>
        <dbReference type="EC" id="2.1.2.3"/>
    </reaction>
</comment>
<comment type="catalytic activity">
    <reaction evidence="1">
        <text>IMP + H2O = 5-formamido-1-(5-phospho-D-ribosyl)imidazole-4-carboxamide</text>
        <dbReference type="Rhea" id="RHEA:18445"/>
        <dbReference type="ChEBI" id="CHEBI:15377"/>
        <dbReference type="ChEBI" id="CHEBI:58053"/>
        <dbReference type="ChEBI" id="CHEBI:58467"/>
        <dbReference type="EC" id="3.5.4.10"/>
    </reaction>
</comment>
<comment type="pathway">
    <text evidence="1">Purine metabolism; IMP biosynthesis via de novo pathway; 5-formamido-1-(5-phospho-D-ribosyl)imidazole-4-carboxamide from 5-amino-1-(5-phospho-D-ribosyl)imidazole-4-carboxamide (10-formyl THF route): step 1/1.</text>
</comment>
<comment type="pathway">
    <text evidence="1">Purine metabolism; IMP biosynthesis via de novo pathway; IMP from 5-formamido-1-(5-phospho-D-ribosyl)imidazole-4-carboxamide: step 1/1.</text>
</comment>
<comment type="domain">
    <text evidence="1">The IMP cyclohydrolase activity resides in the N-terminal region.</text>
</comment>
<comment type="similarity">
    <text evidence="1">Belongs to the PurH family.</text>
</comment>
<feature type="chain" id="PRO_1000096096" description="Bifunctional purine biosynthesis protein PurH">
    <location>
        <begin position="1"/>
        <end position="535"/>
    </location>
</feature>
<feature type="domain" description="MGS-like" evidence="2">
    <location>
        <begin position="1"/>
        <end position="148"/>
    </location>
</feature>
<keyword id="KW-0378">Hydrolase</keyword>
<keyword id="KW-0511">Multifunctional enzyme</keyword>
<keyword id="KW-0658">Purine biosynthesis</keyword>
<keyword id="KW-1185">Reference proteome</keyword>
<keyword id="KW-0808">Transferase</keyword>
<sequence length="535" mass="57881">MNNARPIRRALLSVSDKTGILEFAKSLHAQGVELLSTGGTARLLADNGVPVIEVSDHTGHPEIMDGRVKTLHPKVHGGILARRGIDELVMEQNNIKPIDLVAVNLYPFAETVAKEGCTLADAVENIDIGGPTMVRSTAKNHKDTTIIVNAHDYDRVIAEMEANQGSTTLETRFDLAIAAFEHTAAYDGMIANYFGTKVPAHSQDECHERSLCAEDSKFPRTYNTQLVKKQDLRYGENSHQTAAFYVDTNIDEASVATAVQLQGKALSYNNIADTDSALECVKEFSEPACVIVKHANPCGVAIGENLLEAYNRAFQTDPTSAFGGIIAFNAELDAETAAAIVERQFVEVIIAPKVCQAARDVVAAKANVRLLECGEWANKTTSLDYKRVNGGLLLQDRDQGMVGLDEVKVVSKRQPTEAEMKDLMFCWKVAKFVKSNAIVYAKNSMTIGVGAGQMSRVYSAKVAGIKAADEGLEVQDSVMASDAFFPFRDGIDAAAAAGISCIIQPGGSIRDEEIIAAADEHGMAMVFTGMRHFRH</sequence>
<accession>B1KNA0</accession>
<proteinExistence type="inferred from homology"/>
<protein>
    <recommendedName>
        <fullName evidence="1">Bifunctional purine biosynthesis protein PurH</fullName>
    </recommendedName>
    <domain>
        <recommendedName>
            <fullName evidence="1">Phosphoribosylaminoimidazolecarboxamide formyltransferase</fullName>
            <ecNumber evidence="1">2.1.2.3</ecNumber>
        </recommendedName>
        <alternativeName>
            <fullName evidence="1">AICAR transformylase</fullName>
        </alternativeName>
    </domain>
    <domain>
        <recommendedName>
            <fullName evidence="1">IMP cyclohydrolase</fullName>
            <ecNumber evidence="1">3.5.4.10</ecNumber>
        </recommendedName>
        <alternativeName>
            <fullName evidence="1">ATIC</fullName>
        </alternativeName>
        <alternativeName>
            <fullName evidence="1">IMP synthase</fullName>
        </alternativeName>
        <alternativeName>
            <fullName evidence="1">Inosinicase</fullName>
        </alternativeName>
    </domain>
</protein>
<gene>
    <name evidence="1" type="primary">purH</name>
    <name type="ordered locus">Swoo_0296</name>
</gene>
<reference key="1">
    <citation type="submission" date="2008-02" db="EMBL/GenBank/DDBJ databases">
        <title>Complete sequence of Shewanella woodyi ATCC 51908.</title>
        <authorList>
            <consortium name="US DOE Joint Genome Institute"/>
            <person name="Copeland A."/>
            <person name="Lucas S."/>
            <person name="Lapidus A."/>
            <person name="Glavina del Rio T."/>
            <person name="Dalin E."/>
            <person name="Tice H."/>
            <person name="Bruce D."/>
            <person name="Goodwin L."/>
            <person name="Pitluck S."/>
            <person name="Sims D."/>
            <person name="Brettin T."/>
            <person name="Detter J.C."/>
            <person name="Han C."/>
            <person name="Kuske C.R."/>
            <person name="Schmutz J."/>
            <person name="Larimer F."/>
            <person name="Land M."/>
            <person name="Hauser L."/>
            <person name="Kyrpides N."/>
            <person name="Lykidis A."/>
            <person name="Zhao J.-S."/>
            <person name="Richardson P."/>
        </authorList>
    </citation>
    <scope>NUCLEOTIDE SEQUENCE [LARGE SCALE GENOMIC DNA]</scope>
    <source>
        <strain>ATCC 51908 / MS32</strain>
    </source>
</reference>
<organism>
    <name type="scientific">Shewanella woodyi (strain ATCC 51908 / MS32)</name>
    <dbReference type="NCBI Taxonomy" id="392500"/>
    <lineage>
        <taxon>Bacteria</taxon>
        <taxon>Pseudomonadati</taxon>
        <taxon>Pseudomonadota</taxon>
        <taxon>Gammaproteobacteria</taxon>
        <taxon>Alteromonadales</taxon>
        <taxon>Shewanellaceae</taxon>
        <taxon>Shewanella</taxon>
    </lineage>
</organism>